<accession>P26004</accession>
<gene>
    <name evidence="1" type="primary">groEL</name>
    <name evidence="1" type="synonym">groL</name>
    <name type="synonym">mopA</name>
</gene>
<organism>
    <name type="scientific">Legionella jeonii</name>
    <dbReference type="NCBI Taxonomy" id="2728"/>
    <lineage>
        <taxon>Bacteria</taxon>
        <taxon>Pseudomonadati</taxon>
        <taxon>Pseudomonadota</taxon>
        <taxon>Gammaproteobacteria</taxon>
        <taxon>Legionellales</taxon>
        <taxon>Legionellaceae</taxon>
        <taxon>Legionella</taxon>
    </lineage>
</organism>
<protein>
    <recommendedName>
        <fullName evidence="1">Chaperonin GroEL</fullName>
        <ecNumber evidence="1">5.6.1.7</ecNumber>
    </recommendedName>
    <alternativeName>
        <fullName evidence="1">60 kDa chaperonin</fullName>
    </alternativeName>
    <alternativeName>
        <fullName evidence="1">Chaperonin-60</fullName>
        <shortName evidence="1">Cpn60</shortName>
    </alternativeName>
</protein>
<reference key="1">
    <citation type="journal article" date="1991" name="Endocyt. Cell Res.">
        <title>Nucleotide sequence and temperature-dependent expression of groEL gene isolated from symbiotic bacteria of Amoeba proteus.</title>
        <authorList>
            <person name="Ahn T.I."/>
            <person name="Leeu H.K."/>
            <person name="Kwak I.H."/>
            <person name="Jeon K.W."/>
        </authorList>
    </citation>
    <scope>NUCLEOTIDE SEQUENCE [GENOMIC DNA]</scope>
</reference>
<feature type="chain" id="PRO_0000063258" description="Chaperonin GroEL">
    <location>
        <begin position="1"/>
        <end position="551"/>
    </location>
</feature>
<feature type="binding site" evidence="1">
    <location>
        <begin position="29"/>
        <end position="32"/>
    </location>
    <ligand>
        <name>ATP</name>
        <dbReference type="ChEBI" id="CHEBI:30616"/>
    </ligand>
</feature>
<feature type="binding site" evidence="1">
    <location>
        <position position="50"/>
    </location>
    <ligand>
        <name>ATP</name>
        <dbReference type="ChEBI" id="CHEBI:30616"/>
    </ligand>
</feature>
<feature type="binding site" evidence="1">
    <location>
        <begin position="86"/>
        <end position="90"/>
    </location>
    <ligand>
        <name>ATP</name>
        <dbReference type="ChEBI" id="CHEBI:30616"/>
    </ligand>
</feature>
<feature type="binding site" evidence="1">
    <location>
        <position position="414"/>
    </location>
    <ligand>
        <name>ATP</name>
        <dbReference type="ChEBI" id="CHEBI:30616"/>
    </ligand>
</feature>
<feature type="binding site" evidence="1">
    <location>
        <begin position="478"/>
        <end position="480"/>
    </location>
    <ligand>
        <name>ATP</name>
        <dbReference type="ChEBI" id="CHEBI:30616"/>
    </ligand>
</feature>
<feature type="binding site" evidence="1">
    <location>
        <position position="494"/>
    </location>
    <ligand>
        <name>ATP</name>
        <dbReference type="ChEBI" id="CHEBI:30616"/>
    </ligand>
</feature>
<keyword id="KW-0067">ATP-binding</keyword>
<keyword id="KW-0143">Chaperone</keyword>
<keyword id="KW-0963">Cytoplasm</keyword>
<keyword id="KW-0413">Isomerase</keyword>
<keyword id="KW-0547">Nucleotide-binding</keyword>
<dbReference type="EC" id="5.6.1.7" evidence="1"/>
<dbReference type="EMBL" id="M86549">
    <property type="protein sequence ID" value="AAC09381.1"/>
    <property type="molecule type" value="Genomic_DNA"/>
</dbReference>
<dbReference type="PIR" id="JC2562">
    <property type="entry name" value="JC2562"/>
</dbReference>
<dbReference type="SMR" id="P26004"/>
<dbReference type="GO" id="GO:0005737">
    <property type="term" value="C:cytoplasm"/>
    <property type="evidence" value="ECO:0007669"/>
    <property type="project" value="UniProtKB-SubCell"/>
</dbReference>
<dbReference type="GO" id="GO:0005524">
    <property type="term" value="F:ATP binding"/>
    <property type="evidence" value="ECO:0007669"/>
    <property type="project" value="UniProtKB-UniRule"/>
</dbReference>
<dbReference type="GO" id="GO:0140662">
    <property type="term" value="F:ATP-dependent protein folding chaperone"/>
    <property type="evidence" value="ECO:0007669"/>
    <property type="project" value="InterPro"/>
</dbReference>
<dbReference type="GO" id="GO:0016853">
    <property type="term" value="F:isomerase activity"/>
    <property type="evidence" value="ECO:0007669"/>
    <property type="project" value="UniProtKB-KW"/>
</dbReference>
<dbReference type="GO" id="GO:0051082">
    <property type="term" value="F:unfolded protein binding"/>
    <property type="evidence" value="ECO:0007669"/>
    <property type="project" value="UniProtKB-UniRule"/>
</dbReference>
<dbReference type="GO" id="GO:0042026">
    <property type="term" value="P:protein refolding"/>
    <property type="evidence" value="ECO:0007669"/>
    <property type="project" value="UniProtKB-UniRule"/>
</dbReference>
<dbReference type="CDD" id="cd03344">
    <property type="entry name" value="GroEL"/>
    <property type="match status" value="1"/>
</dbReference>
<dbReference type="FunFam" id="1.10.560.10:FF:000001">
    <property type="entry name" value="60 kDa chaperonin"/>
    <property type="match status" value="1"/>
</dbReference>
<dbReference type="FunFam" id="3.50.7.10:FF:000001">
    <property type="entry name" value="60 kDa chaperonin"/>
    <property type="match status" value="1"/>
</dbReference>
<dbReference type="Gene3D" id="3.50.7.10">
    <property type="entry name" value="GroEL"/>
    <property type="match status" value="1"/>
</dbReference>
<dbReference type="Gene3D" id="1.10.560.10">
    <property type="entry name" value="GroEL-like equatorial domain"/>
    <property type="match status" value="1"/>
</dbReference>
<dbReference type="Gene3D" id="3.30.260.10">
    <property type="entry name" value="TCP-1-like chaperonin intermediate domain"/>
    <property type="match status" value="1"/>
</dbReference>
<dbReference type="HAMAP" id="MF_00600">
    <property type="entry name" value="CH60"/>
    <property type="match status" value="1"/>
</dbReference>
<dbReference type="InterPro" id="IPR018370">
    <property type="entry name" value="Chaperonin_Cpn60_CS"/>
</dbReference>
<dbReference type="InterPro" id="IPR001844">
    <property type="entry name" value="Cpn60/GroEL"/>
</dbReference>
<dbReference type="InterPro" id="IPR002423">
    <property type="entry name" value="Cpn60/GroEL/TCP-1"/>
</dbReference>
<dbReference type="InterPro" id="IPR027409">
    <property type="entry name" value="GroEL-like_apical_dom_sf"/>
</dbReference>
<dbReference type="InterPro" id="IPR027413">
    <property type="entry name" value="GROEL-like_equatorial_sf"/>
</dbReference>
<dbReference type="InterPro" id="IPR027410">
    <property type="entry name" value="TCP-1-like_intermed_sf"/>
</dbReference>
<dbReference type="NCBIfam" id="TIGR02348">
    <property type="entry name" value="GroEL"/>
    <property type="match status" value="1"/>
</dbReference>
<dbReference type="NCBIfam" id="NF000592">
    <property type="entry name" value="PRK00013.1"/>
    <property type="match status" value="1"/>
</dbReference>
<dbReference type="NCBIfam" id="NF009487">
    <property type="entry name" value="PRK12849.1"/>
    <property type="match status" value="1"/>
</dbReference>
<dbReference type="NCBIfam" id="NF009488">
    <property type="entry name" value="PRK12850.1"/>
    <property type="match status" value="1"/>
</dbReference>
<dbReference type="NCBIfam" id="NF009489">
    <property type="entry name" value="PRK12851.1"/>
    <property type="match status" value="1"/>
</dbReference>
<dbReference type="PANTHER" id="PTHR45633">
    <property type="entry name" value="60 KDA HEAT SHOCK PROTEIN, MITOCHONDRIAL"/>
    <property type="match status" value="1"/>
</dbReference>
<dbReference type="Pfam" id="PF00118">
    <property type="entry name" value="Cpn60_TCP1"/>
    <property type="match status" value="1"/>
</dbReference>
<dbReference type="PRINTS" id="PR00298">
    <property type="entry name" value="CHAPERONIN60"/>
</dbReference>
<dbReference type="SUPFAM" id="SSF52029">
    <property type="entry name" value="GroEL apical domain-like"/>
    <property type="match status" value="1"/>
</dbReference>
<dbReference type="SUPFAM" id="SSF48592">
    <property type="entry name" value="GroEL equatorial domain-like"/>
    <property type="match status" value="1"/>
</dbReference>
<dbReference type="SUPFAM" id="SSF54849">
    <property type="entry name" value="GroEL-intermediate domain like"/>
    <property type="match status" value="1"/>
</dbReference>
<dbReference type="PROSITE" id="PS00296">
    <property type="entry name" value="CHAPERONINS_CPN60"/>
    <property type="match status" value="1"/>
</dbReference>
<proteinExistence type="inferred from homology"/>
<evidence type="ECO:0000255" key="1">
    <source>
        <dbReference type="HAMAP-Rule" id="MF_00600"/>
    </source>
</evidence>
<name>CH60_LEGJE</name>
<sequence>MAKELRFGDDARQQMLAGVNALADRVKATMGPSGRNVVLERSFGAPTVTKDGVSVAKEIEFENRFKNMGAQMVKEVAAKTSDTAGDGTTTATVLARSIVVEGHKAVAAGMNPMDLKRGIDKAVTAITKELQKMSKPCKDGKAIAQVGTISANSDQAIGSIIAEAMEKVGKEGVITVEDGNGLENELSVVEGMQFDRGYISPYFINNQQNMSAELEHPFILLVDKKIATIRDMLSVLEAVAKSGRPLLIVAEDVEGEALATLVVNNMRGIVKVCAVKAPGFGDRRKAMLQDIAILTNGQVISEEIGTSLETASLESLGTAKRIVVTKENTTIIDGEGKATEINARIAQIRAQMEETSSDYDREKLQERVAKLAGGVAVIKVGAATEIEMKEKKARVEDALHATRAAVEEGIVAGGGVALIRAQKVLDGLKGDNADQDMGINILRRAIESPLRQIVANAGYESSVIVNKVAEHKDNFGFNAATGQYGDMVEMGILDPTKVTRTALQNAASVRSLMLTTECMVADLPKKDEGMAGAGDMGGMGGMGGMGGMGMM</sequence>
<comment type="function">
    <text evidence="1">Together with its co-chaperonin GroES, plays an essential role in assisting protein folding. The GroEL-GroES system forms a nano-cage that allows encapsulation of the non-native substrate proteins and provides a physical environment optimized to promote and accelerate protein folding.</text>
</comment>
<comment type="catalytic activity">
    <reaction evidence="1">
        <text>ATP + H2O + a folded polypeptide = ADP + phosphate + an unfolded polypeptide.</text>
        <dbReference type="EC" id="5.6.1.7"/>
    </reaction>
</comment>
<comment type="subunit">
    <text evidence="1">Forms a cylinder of 14 subunits composed of two heptameric rings stacked back-to-back. Interacts with the co-chaperonin GroES.</text>
</comment>
<comment type="subcellular location">
    <subcellularLocation>
        <location evidence="1">Cytoplasm</location>
    </subcellularLocation>
</comment>
<comment type="similarity">
    <text evidence="1">Belongs to the chaperonin (HSP60) family.</text>
</comment>